<sequence length="172" mass="19254">MFVNSVLAESNSLYIGDLVFYIVTFIILMLLVKHFAWKPVTDMMKKRADKIANDIDNAARSRESAEKMAAKRQAELQSSRQEAAEIVSNAKKSGETQRAQIVETAQKDAQALKQQAQKDAEQARRDALNSAKDDVANLSIEIASKLIQKELKADDQKELIDSYIEGLVEHES</sequence>
<reference key="1">
    <citation type="journal article" date="2011" name="PLoS Genet.">
        <title>The evolution of host specialization in the vertebrate gut symbiont Lactobacillus reuteri.</title>
        <authorList>
            <person name="Frese S.A."/>
            <person name="Benson A.K."/>
            <person name="Tannock G.W."/>
            <person name="Loach D.M."/>
            <person name="Kim J."/>
            <person name="Zhang M."/>
            <person name="Oh P.L."/>
            <person name="Heng N.C."/>
            <person name="Patil P.B."/>
            <person name="Juge N."/>
            <person name="Mackenzie D.A."/>
            <person name="Pearson B.M."/>
            <person name="Lapidus A."/>
            <person name="Dalin E."/>
            <person name="Tice H."/>
            <person name="Goltsman E."/>
            <person name="Land M."/>
            <person name="Hauser L."/>
            <person name="Ivanova N."/>
            <person name="Kyrpides N.C."/>
            <person name="Walter J."/>
        </authorList>
    </citation>
    <scope>NUCLEOTIDE SEQUENCE [LARGE SCALE GENOMIC DNA]</scope>
    <source>
        <strain>DSM 20016</strain>
    </source>
</reference>
<evidence type="ECO:0000255" key="1">
    <source>
        <dbReference type="HAMAP-Rule" id="MF_01398"/>
    </source>
</evidence>
<evidence type="ECO:0000256" key="2">
    <source>
        <dbReference type="SAM" id="MobiDB-lite"/>
    </source>
</evidence>
<gene>
    <name evidence="1" type="primary">atpF</name>
    <name type="ordered locus">Lreu_0463</name>
</gene>
<accession>A5VIQ7</accession>
<comment type="function">
    <text evidence="1">F(1)F(0) ATP synthase produces ATP from ADP in the presence of a proton or sodium gradient. F-type ATPases consist of two structural domains, F(1) containing the extramembraneous catalytic core and F(0) containing the membrane proton channel, linked together by a central stalk and a peripheral stalk. During catalysis, ATP synthesis in the catalytic domain of F(1) is coupled via a rotary mechanism of the central stalk subunits to proton translocation.</text>
</comment>
<comment type="function">
    <text evidence="1">Component of the F(0) channel, it forms part of the peripheral stalk, linking F(1) to F(0).</text>
</comment>
<comment type="subunit">
    <text evidence="1">F-type ATPases have 2 components, F(1) - the catalytic core - and F(0) - the membrane proton channel. F(1) has five subunits: alpha(3), beta(3), gamma(1), delta(1), epsilon(1). F(0) has three main subunits: a(1), b(2) and c(10-14). The alpha and beta chains form an alternating ring which encloses part of the gamma chain. F(1) is attached to F(0) by a central stalk formed by the gamma and epsilon chains, while a peripheral stalk is formed by the delta and b chains.</text>
</comment>
<comment type="subcellular location">
    <subcellularLocation>
        <location evidence="1">Cell membrane</location>
        <topology evidence="1">Single-pass membrane protein</topology>
    </subcellularLocation>
</comment>
<comment type="similarity">
    <text evidence="1">Belongs to the ATPase B chain family.</text>
</comment>
<keyword id="KW-0066">ATP synthesis</keyword>
<keyword id="KW-1003">Cell membrane</keyword>
<keyword id="KW-0138">CF(0)</keyword>
<keyword id="KW-0375">Hydrogen ion transport</keyword>
<keyword id="KW-0406">Ion transport</keyword>
<keyword id="KW-0472">Membrane</keyword>
<keyword id="KW-1185">Reference proteome</keyword>
<keyword id="KW-0812">Transmembrane</keyword>
<keyword id="KW-1133">Transmembrane helix</keyword>
<keyword id="KW-0813">Transport</keyword>
<name>ATPF_LIMRD</name>
<protein>
    <recommendedName>
        <fullName evidence="1">ATP synthase subunit b</fullName>
    </recommendedName>
    <alternativeName>
        <fullName evidence="1">ATP synthase F(0) sector subunit b</fullName>
    </alternativeName>
    <alternativeName>
        <fullName evidence="1">ATPase subunit I</fullName>
    </alternativeName>
    <alternativeName>
        <fullName evidence="1">F-type ATPase subunit b</fullName>
        <shortName evidence="1">F-ATPase subunit b</shortName>
    </alternativeName>
</protein>
<organism>
    <name type="scientific">Limosilactobacillus reuteri (strain DSM 20016)</name>
    <name type="common">Lactobacillus reuteri</name>
    <dbReference type="NCBI Taxonomy" id="557436"/>
    <lineage>
        <taxon>Bacteria</taxon>
        <taxon>Bacillati</taxon>
        <taxon>Bacillota</taxon>
        <taxon>Bacilli</taxon>
        <taxon>Lactobacillales</taxon>
        <taxon>Lactobacillaceae</taxon>
        <taxon>Limosilactobacillus</taxon>
    </lineage>
</organism>
<proteinExistence type="inferred from homology"/>
<dbReference type="EMBL" id="CP000705">
    <property type="protein sequence ID" value="ABQ82731.1"/>
    <property type="molecule type" value="Genomic_DNA"/>
</dbReference>
<dbReference type="RefSeq" id="WP_003666564.1">
    <property type="nucleotide sequence ID" value="NZ_AZDD01000022.1"/>
</dbReference>
<dbReference type="SMR" id="A5VIQ7"/>
<dbReference type="STRING" id="557436.Lreu_0463"/>
<dbReference type="GeneID" id="77192082"/>
<dbReference type="KEGG" id="lre:Lreu_0463"/>
<dbReference type="eggNOG" id="COG0711">
    <property type="taxonomic scope" value="Bacteria"/>
</dbReference>
<dbReference type="HOGENOM" id="CLU_079215_4_2_9"/>
<dbReference type="OMA" id="ILAWFTM"/>
<dbReference type="Proteomes" id="UP000001991">
    <property type="component" value="Chromosome"/>
</dbReference>
<dbReference type="GO" id="GO:0005886">
    <property type="term" value="C:plasma membrane"/>
    <property type="evidence" value="ECO:0007669"/>
    <property type="project" value="UniProtKB-SubCell"/>
</dbReference>
<dbReference type="GO" id="GO:0045259">
    <property type="term" value="C:proton-transporting ATP synthase complex"/>
    <property type="evidence" value="ECO:0007669"/>
    <property type="project" value="UniProtKB-KW"/>
</dbReference>
<dbReference type="GO" id="GO:0046933">
    <property type="term" value="F:proton-transporting ATP synthase activity, rotational mechanism"/>
    <property type="evidence" value="ECO:0007669"/>
    <property type="project" value="UniProtKB-UniRule"/>
</dbReference>
<dbReference type="GO" id="GO:0046961">
    <property type="term" value="F:proton-transporting ATPase activity, rotational mechanism"/>
    <property type="evidence" value="ECO:0007669"/>
    <property type="project" value="TreeGrafter"/>
</dbReference>
<dbReference type="CDD" id="cd06503">
    <property type="entry name" value="ATP-synt_Fo_b"/>
    <property type="match status" value="1"/>
</dbReference>
<dbReference type="Gene3D" id="6.10.250.1580">
    <property type="match status" value="1"/>
</dbReference>
<dbReference type="HAMAP" id="MF_01398">
    <property type="entry name" value="ATP_synth_b_bprime"/>
    <property type="match status" value="1"/>
</dbReference>
<dbReference type="InterPro" id="IPR028987">
    <property type="entry name" value="ATP_synth_B-like_membr_sf"/>
</dbReference>
<dbReference type="InterPro" id="IPR002146">
    <property type="entry name" value="ATP_synth_b/b'su_bac/chlpt"/>
</dbReference>
<dbReference type="InterPro" id="IPR005864">
    <property type="entry name" value="ATP_synth_F0_bsu_bac"/>
</dbReference>
<dbReference type="InterPro" id="IPR050059">
    <property type="entry name" value="ATP_synthase_B_chain"/>
</dbReference>
<dbReference type="NCBIfam" id="TIGR01144">
    <property type="entry name" value="ATP_synt_b"/>
    <property type="match status" value="1"/>
</dbReference>
<dbReference type="PANTHER" id="PTHR33445:SF1">
    <property type="entry name" value="ATP SYNTHASE SUBUNIT B"/>
    <property type="match status" value="1"/>
</dbReference>
<dbReference type="PANTHER" id="PTHR33445">
    <property type="entry name" value="ATP SYNTHASE SUBUNIT B', CHLOROPLASTIC"/>
    <property type="match status" value="1"/>
</dbReference>
<dbReference type="Pfam" id="PF00430">
    <property type="entry name" value="ATP-synt_B"/>
    <property type="match status" value="1"/>
</dbReference>
<dbReference type="SUPFAM" id="SSF81573">
    <property type="entry name" value="F1F0 ATP synthase subunit B, membrane domain"/>
    <property type="match status" value="1"/>
</dbReference>
<feature type="chain" id="PRO_0000368548" description="ATP synthase subunit b">
    <location>
        <begin position="1"/>
        <end position="172"/>
    </location>
</feature>
<feature type="transmembrane region" description="Helical" evidence="1">
    <location>
        <begin position="12"/>
        <end position="32"/>
    </location>
</feature>
<feature type="region of interest" description="Disordered" evidence="2">
    <location>
        <begin position="63"/>
        <end position="131"/>
    </location>
</feature>
<feature type="compositionally biased region" description="Basic and acidic residues" evidence="2">
    <location>
        <begin position="63"/>
        <end position="74"/>
    </location>
</feature>
<feature type="compositionally biased region" description="Basic and acidic residues" evidence="2">
    <location>
        <begin position="116"/>
        <end position="131"/>
    </location>
</feature>